<organism>
    <name type="scientific">Gibberella zeae (strain ATCC MYA-4620 / CBS 123657 / FGSC 9075 / NRRL 31084 / PH-1)</name>
    <name type="common">Wheat head blight fungus</name>
    <name type="synonym">Fusarium graminearum</name>
    <dbReference type="NCBI Taxonomy" id="229533"/>
    <lineage>
        <taxon>Eukaryota</taxon>
        <taxon>Fungi</taxon>
        <taxon>Dikarya</taxon>
        <taxon>Ascomycota</taxon>
        <taxon>Pezizomycotina</taxon>
        <taxon>Sordariomycetes</taxon>
        <taxon>Hypocreomycetidae</taxon>
        <taxon>Hypocreales</taxon>
        <taxon>Nectriaceae</taxon>
        <taxon>Fusarium</taxon>
    </lineage>
</organism>
<evidence type="ECO:0000250" key="1">
    <source>
        <dbReference type="UniProtKB" id="P04798"/>
    </source>
</evidence>
<evidence type="ECO:0000255" key="2"/>
<evidence type="ECO:0000255" key="3">
    <source>
        <dbReference type="PROSITE-ProRule" id="PRU00498"/>
    </source>
</evidence>
<evidence type="ECO:0000269" key="4">
    <source>
    </source>
</evidence>
<evidence type="ECO:0000269" key="5">
    <source>
    </source>
</evidence>
<evidence type="ECO:0000303" key="6">
    <source>
    </source>
</evidence>
<evidence type="ECO:0000305" key="7"/>
<evidence type="ECO:0000305" key="8">
    <source>
    </source>
</evidence>
<reference key="1">
    <citation type="journal article" date="2007" name="Science">
        <title>The Fusarium graminearum genome reveals a link between localized polymorphism and pathogen specialization.</title>
        <authorList>
            <person name="Cuomo C.A."/>
            <person name="Gueldener U."/>
            <person name="Xu J.-R."/>
            <person name="Trail F."/>
            <person name="Turgeon B.G."/>
            <person name="Di Pietro A."/>
            <person name="Walton J.D."/>
            <person name="Ma L.-J."/>
            <person name="Baker S.E."/>
            <person name="Rep M."/>
            <person name="Adam G."/>
            <person name="Antoniw J."/>
            <person name="Baldwin T."/>
            <person name="Calvo S.E."/>
            <person name="Chang Y.-L."/>
            <person name="DeCaprio D."/>
            <person name="Gale L.R."/>
            <person name="Gnerre S."/>
            <person name="Goswami R.S."/>
            <person name="Hammond-Kosack K."/>
            <person name="Harris L.J."/>
            <person name="Hilburn K."/>
            <person name="Kennell J.C."/>
            <person name="Kroken S."/>
            <person name="Magnuson J.K."/>
            <person name="Mannhaupt G."/>
            <person name="Mauceli E.W."/>
            <person name="Mewes H.-W."/>
            <person name="Mitterbauer R."/>
            <person name="Muehlbauer G."/>
            <person name="Muensterkoetter M."/>
            <person name="Nelson D."/>
            <person name="O'Donnell K."/>
            <person name="Ouellet T."/>
            <person name="Qi W."/>
            <person name="Quesneville H."/>
            <person name="Roncero M.I.G."/>
            <person name="Seong K.-Y."/>
            <person name="Tetko I.V."/>
            <person name="Urban M."/>
            <person name="Waalwijk C."/>
            <person name="Ward T.J."/>
            <person name="Yao J."/>
            <person name="Birren B.W."/>
            <person name="Kistler H.C."/>
        </authorList>
    </citation>
    <scope>NUCLEOTIDE SEQUENCE [LARGE SCALE GENOMIC DNA]</scope>
    <source>
        <strain>ATCC MYA-4620 / CBS 123657 / FGSC 9075 / NRRL 31084 / PH-1</strain>
    </source>
</reference>
<reference key="2">
    <citation type="journal article" date="2010" name="Nature">
        <title>Comparative genomics reveals mobile pathogenicity chromosomes in Fusarium.</title>
        <authorList>
            <person name="Ma L.-J."/>
            <person name="van der Does H.C."/>
            <person name="Borkovich K.A."/>
            <person name="Coleman J.J."/>
            <person name="Daboussi M.-J."/>
            <person name="Di Pietro A."/>
            <person name="Dufresne M."/>
            <person name="Freitag M."/>
            <person name="Grabherr M."/>
            <person name="Henrissat B."/>
            <person name="Houterman P.M."/>
            <person name="Kang S."/>
            <person name="Shim W.-B."/>
            <person name="Woloshuk C."/>
            <person name="Xie X."/>
            <person name="Xu J.-R."/>
            <person name="Antoniw J."/>
            <person name="Baker S.E."/>
            <person name="Bluhm B.H."/>
            <person name="Breakspear A."/>
            <person name="Brown D.W."/>
            <person name="Butchko R.A.E."/>
            <person name="Chapman S."/>
            <person name="Coulson R."/>
            <person name="Coutinho P.M."/>
            <person name="Danchin E.G.J."/>
            <person name="Diener A."/>
            <person name="Gale L.R."/>
            <person name="Gardiner D.M."/>
            <person name="Goff S."/>
            <person name="Hammond-Kosack K.E."/>
            <person name="Hilburn K."/>
            <person name="Hua-Van A."/>
            <person name="Jonkers W."/>
            <person name="Kazan K."/>
            <person name="Kodira C.D."/>
            <person name="Koehrsen M."/>
            <person name="Kumar L."/>
            <person name="Lee Y.-H."/>
            <person name="Li L."/>
            <person name="Manners J.M."/>
            <person name="Miranda-Saavedra D."/>
            <person name="Mukherjee M."/>
            <person name="Park G."/>
            <person name="Park J."/>
            <person name="Park S.-Y."/>
            <person name="Proctor R.H."/>
            <person name="Regev A."/>
            <person name="Ruiz-Roldan M.C."/>
            <person name="Sain D."/>
            <person name="Sakthikumar S."/>
            <person name="Sykes S."/>
            <person name="Schwartz D.C."/>
            <person name="Turgeon B.G."/>
            <person name="Wapinski I."/>
            <person name="Yoder O."/>
            <person name="Young S."/>
            <person name="Zeng Q."/>
            <person name="Zhou S."/>
            <person name="Galagan J."/>
            <person name="Cuomo C.A."/>
            <person name="Kistler H.C."/>
            <person name="Rep M."/>
        </authorList>
    </citation>
    <scope>GENOME REANNOTATION</scope>
    <source>
        <strain>ATCC MYA-4620 / CBS 123657 / FGSC 9075 / NRRL 31084 / PH-1</strain>
    </source>
</reference>
<reference key="3">
    <citation type="journal article" date="2015" name="BMC Genomics">
        <title>The completed genome sequence of the pathogenic ascomycete fungus Fusarium graminearum.</title>
        <authorList>
            <person name="King R."/>
            <person name="Urban M."/>
            <person name="Hammond-Kosack M.C.U."/>
            <person name="Hassani-Pak K."/>
            <person name="Hammond-Kosack K.E."/>
        </authorList>
    </citation>
    <scope>NUCLEOTIDE SEQUENCE [LARGE SCALE GENOMIC DNA]</scope>
    <source>
        <strain>ATCC MYA-4620 / CBS 123657 / FGSC 9075 / NRRL 31084 / PH-1</strain>
    </source>
</reference>
<reference key="4">
    <citation type="journal article" date="2010" name="Appl. Environ. Microbiol.">
        <title>CLM1 of Fusarium graminearum encodes a longiborneol synthase required for culmorin production.</title>
        <authorList>
            <person name="McCormick S.P."/>
            <person name="Alexander N.J."/>
            <person name="Harris L.J."/>
        </authorList>
    </citation>
    <scope>FUNCTION</scope>
</reference>
<reference key="5">
    <citation type="journal article" date="2016" name="J. Nat. Prod.">
        <title>Hydroxylation of Longiborneol by a Clm2-Encoded CYP450 Monooxygenase to Produce Culmorin in Fusarium graminearum.</title>
        <authorList>
            <person name="Bahadoor A."/>
            <person name="Schneiderman D."/>
            <person name="Gemmill L."/>
            <person name="Bosnich W."/>
            <person name="Blackwell B."/>
            <person name="Melanson J.E."/>
            <person name="McRae G."/>
            <person name="Harris L.J."/>
        </authorList>
    </citation>
    <scope>FUNCTION</scope>
    <scope>DISRUPTION PHENOTYPE</scope>
    <scope>PATHWAY</scope>
</reference>
<accession>A0A098D1J7</accession>
<accession>A0A0E0RKQ1</accession>
<feature type="chain" id="PRO_0000444958" description="Cytochrome P450 monooxygenase CLM2">
    <location>
        <begin position="1"/>
        <end position="529"/>
    </location>
</feature>
<feature type="transmembrane region" description="Helical" evidence="2">
    <location>
        <begin position="2"/>
        <end position="19"/>
    </location>
</feature>
<feature type="binding site" description="axial binding residue" evidence="1">
    <location>
        <position position="438"/>
    </location>
    <ligand>
        <name>heme</name>
        <dbReference type="ChEBI" id="CHEBI:30413"/>
    </ligand>
    <ligandPart>
        <name>Fe</name>
        <dbReference type="ChEBI" id="CHEBI:18248"/>
    </ligandPart>
</feature>
<feature type="glycosylation site" description="N-linked (GlcNAc...) asparagine" evidence="3">
    <location>
        <position position="244"/>
    </location>
</feature>
<feature type="glycosylation site" description="N-linked (GlcNAc...) asparagine" evidence="3">
    <location>
        <position position="281"/>
    </location>
</feature>
<protein>
    <recommendedName>
        <fullName evidence="6">Cytochrome P450 monooxygenase CLM2</fullName>
        <ecNumber evidence="8">1.-.-.-</ecNumber>
    </recommendedName>
    <alternativeName>
        <fullName evidence="6">Culmorin biosynthesis protein 2</fullName>
    </alternativeName>
</protein>
<keyword id="KW-0325">Glycoprotein</keyword>
<keyword id="KW-0349">Heme</keyword>
<keyword id="KW-0408">Iron</keyword>
<keyword id="KW-0472">Membrane</keyword>
<keyword id="KW-0479">Metal-binding</keyword>
<keyword id="KW-0503">Monooxygenase</keyword>
<keyword id="KW-0560">Oxidoreductase</keyword>
<keyword id="KW-1185">Reference proteome</keyword>
<keyword id="KW-0812">Transmembrane</keyword>
<keyword id="KW-1133">Transmembrane helix</keyword>
<keyword id="KW-0843">Virulence</keyword>
<sequence length="529" mass="59994">MLLIIVVLVGTLIYFLSFHNKKRHGLPPGPKPLPIIGNIKDMPPKGVAAFRHWLKHKDTYGPVSSVSVLGQPLILIHDREAAHYLFDKSSGKSSGRPSANFGGRLCGFDQILSLQQYGDTFKRHRKLVHRQMGTRAGAAKFRQIQDVESHRFLLRSLDNPGNLMEHIRKEAGGVILKATYGYSIEPHKPDPLVHLVEFMVEGISIVVVPMKFVVDFLPWLEYIPECLPGMSFKARARRWRTILNNTIEAPYQFVRQQMAKGIQFESYVSSLLTQEKLKGGNDTLDETYEADIKRTAAIMYAGGADTTVSTIQSFVLAMMVYPEVLKKAQAEIDNVIGPDRLPGFEDRENLPYINSMVKESLRWMPAVPMGAAHKADDDIYYGDLCIPKGSFLLPNVWWFLHNPETYQDPERYDPDRYLEPRNEPDPDSNCWGYGRRICPGRLLADESIFIVIARVVAAFDIEKDVDEQGNTIEPKVEFTTEGALSRPVDYPYRIKPRNAKCVDLIRAVEKEHPWDKGDASLLQQDMVVL</sequence>
<dbReference type="EC" id="1.-.-.-" evidence="8"/>
<dbReference type="EMBL" id="HG970332">
    <property type="protein sequence ID" value="CEF71826.1"/>
    <property type="molecule type" value="Genomic_DNA"/>
</dbReference>
<dbReference type="SMR" id="A0A098D1J7"/>
<dbReference type="STRING" id="229533.A0A098D1J7"/>
<dbReference type="GlyCosmos" id="A0A098D1J7">
    <property type="glycosylation" value="2 sites, No reported glycans"/>
</dbReference>
<dbReference type="VEuPathDB" id="FungiDB:FGRAMPH1_01G00053"/>
<dbReference type="eggNOG" id="KOG0156">
    <property type="taxonomic scope" value="Eukaryota"/>
</dbReference>
<dbReference type="InParanoid" id="A0A098D1J7"/>
<dbReference type="Proteomes" id="UP000070720">
    <property type="component" value="Chromosome 1"/>
</dbReference>
<dbReference type="GO" id="GO:0016020">
    <property type="term" value="C:membrane"/>
    <property type="evidence" value="ECO:0007669"/>
    <property type="project" value="UniProtKB-SubCell"/>
</dbReference>
<dbReference type="GO" id="GO:0020037">
    <property type="term" value="F:heme binding"/>
    <property type="evidence" value="ECO:0007669"/>
    <property type="project" value="InterPro"/>
</dbReference>
<dbReference type="GO" id="GO:0005506">
    <property type="term" value="F:iron ion binding"/>
    <property type="evidence" value="ECO:0007669"/>
    <property type="project" value="InterPro"/>
</dbReference>
<dbReference type="GO" id="GO:0004497">
    <property type="term" value="F:monooxygenase activity"/>
    <property type="evidence" value="ECO:0007669"/>
    <property type="project" value="UniProtKB-KW"/>
</dbReference>
<dbReference type="GO" id="GO:0016705">
    <property type="term" value="F:oxidoreductase activity, acting on paired donors, with incorporation or reduction of molecular oxygen"/>
    <property type="evidence" value="ECO:0007669"/>
    <property type="project" value="InterPro"/>
</dbReference>
<dbReference type="CDD" id="cd11065">
    <property type="entry name" value="CYP64-like"/>
    <property type="match status" value="1"/>
</dbReference>
<dbReference type="Gene3D" id="1.10.630.10">
    <property type="entry name" value="Cytochrome P450"/>
    <property type="match status" value="1"/>
</dbReference>
<dbReference type="InterPro" id="IPR001128">
    <property type="entry name" value="Cyt_P450"/>
</dbReference>
<dbReference type="InterPro" id="IPR017972">
    <property type="entry name" value="Cyt_P450_CS"/>
</dbReference>
<dbReference type="InterPro" id="IPR002401">
    <property type="entry name" value="Cyt_P450_E_grp-I"/>
</dbReference>
<dbReference type="InterPro" id="IPR036396">
    <property type="entry name" value="Cyt_P450_sf"/>
</dbReference>
<dbReference type="InterPro" id="IPR050364">
    <property type="entry name" value="Cytochrome_P450_fung"/>
</dbReference>
<dbReference type="PANTHER" id="PTHR46300:SF7">
    <property type="entry name" value="P450, PUTATIVE (EUROFUNG)-RELATED"/>
    <property type="match status" value="1"/>
</dbReference>
<dbReference type="PANTHER" id="PTHR46300">
    <property type="entry name" value="P450, PUTATIVE (EUROFUNG)-RELATED-RELATED"/>
    <property type="match status" value="1"/>
</dbReference>
<dbReference type="Pfam" id="PF00067">
    <property type="entry name" value="p450"/>
    <property type="match status" value="1"/>
</dbReference>
<dbReference type="PRINTS" id="PR00463">
    <property type="entry name" value="EP450I"/>
</dbReference>
<dbReference type="PRINTS" id="PR00385">
    <property type="entry name" value="P450"/>
</dbReference>
<dbReference type="SUPFAM" id="SSF48264">
    <property type="entry name" value="Cytochrome P450"/>
    <property type="match status" value="1"/>
</dbReference>
<dbReference type="PROSITE" id="PS00086">
    <property type="entry name" value="CYTOCHROME_P450"/>
    <property type="match status" value="1"/>
</dbReference>
<gene>
    <name evidence="6" type="primary">CLM2</name>
    <name type="ORF">FGRAMPH1_01T00053</name>
</gene>
<name>CLM2_GIBZE</name>
<proteinExistence type="inferred from homology"/>
<comment type="function">
    <text evidence="4 5">Cytochrome P450 monooxygenase involved in the biosynthesis of culmorin, a tricyclic sesquiterpene diol reported to have antifungal activity and some phytotoxicity to wheat coleoptile tissue, contributing to Fusarium head blight disease (PubMed:19880637). The terpene cyclase CLM1 is responsible for the cyclization of farnesyl diphosphate into the intermediate longiborneol (PubMed:19880637). Longiborneol is then hydroxylated in a regio- and endo-stereoselective manner at position C-11 by the cytochrome P450 monooxygenase CLM2 to produce culmorin (PubMed:26673640). Additional non-specific oxygenases are also able to hydroxylate longiborneol at other sites than C-11 leading to 3-hydroxylongiborneol, 5-hydroxylongiborneol, 12-hydroxylongiborneol and 15-hydroxylongiborneol (PubMed:26673640). Moreover, another oxygenase capable of installing a C-11 exo-hydroxy group in longiborneol can also yield 11-epi-acetylculmorin (PubMed:26673640). The production of these longiborneol derivatives is dwarfed by the high abundance of culmorin, suggesting that CLM2 displays superior enzymatic activity to the unidentified, possibly promiscuous, additional oxygenases (PubMed:26673640).</text>
</comment>
<comment type="catalytic activity">
    <reaction evidence="8">
        <text>(-)-longiborneol + reduced [NADPH--hemoprotein reductase] + O2 = culmorin + oxidized [NADPH--hemoprotein reductase] + H2O + H(+)</text>
        <dbReference type="Rhea" id="RHEA:83903"/>
        <dbReference type="Rhea" id="RHEA-COMP:11964"/>
        <dbReference type="Rhea" id="RHEA-COMP:11965"/>
        <dbReference type="ChEBI" id="CHEBI:15377"/>
        <dbReference type="ChEBI" id="CHEBI:15378"/>
        <dbReference type="ChEBI" id="CHEBI:15379"/>
        <dbReference type="ChEBI" id="CHEBI:57618"/>
        <dbReference type="ChEBI" id="CHEBI:58210"/>
        <dbReference type="ChEBI" id="CHEBI:143197"/>
        <dbReference type="ChEBI" id="CHEBI:233473"/>
    </reaction>
    <physiologicalReaction direction="left-to-right" evidence="8">
        <dbReference type="Rhea" id="RHEA:83904"/>
    </physiologicalReaction>
</comment>
<comment type="cofactor">
    <cofactor evidence="1">
        <name>heme</name>
        <dbReference type="ChEBI" id="CHEBI:30413"/>
    </cofactor>
</comment>
<comment type="pathway">
    <text evidence="5">Mycotoxin biosynthesis.</text>
</comment>
<comment type="subcellular location">
    <subcellularLocation>
        <location evidence="2">Membrane</location>
        <topology evidence="2">Single-pass membrane protein</topology>
    </subcellularLocation>
</comment>
<comment type="disruption phenotype">
    <text evidence="5">Leads to complete loss of culmorin production (PubMed:26673640). Accumulates 3-hydroxylongiborneol, 5-hydroxylongiborneol, 12-hydroxylongiborneol and 15-hydroxylongiborneol, suggesting that non-specific oxygenases are still able to hydroxylate longiborneol at other sites than C-11 (PubMed:26673640). Accumulates also 11-epi-acetylculmorin, pointing to the existence of an oxygenase capable of installing a C-11 exo-hydroxy group in longiborneol, whose activity is not apparent until CLM2 is disrupted (PubMed:26673640). Does not affect the trichothecene biosynthetic pathway since 15-acetyldeoxynivalenol (15ADON) is still produced (PubMed:26673640).</text>
</comment>
<comment type="similarity">
    <text evidence="7">Belongs to the cytochrome P450 family.</text>
</comment>